<sequence>MSFSVEVLAGIAIELQRGIGHQDRFQRLITTLRQVLACDASALLRYESRQFIPLAIDGLAQDVLGRRFTLEGHPRLEAIARAGDVVRFPADSDLPDPYDGLIPGQESLKVHACVGLPLFAGQNLIGALTLDAMTPEQFEVFSDEELRLVAALAAGALSNALLIEQLESQNMLPGSSGVFEPIKETHMIGLSPAMTQLKKEIEIVAGSDLNVLIGGETGTGKELVAKAIHQGSPRAVNPLVYLNCAALPESVAESELFGHVKGAFTGAISNRSGKFEMADNGTLFLDEIGELSLALQAKLLRVLQYGDIQRVGDDRSLRVDVRVLAATNRDLREEVLAGRFRADLFHRLSVFPLFVPPLRERGDDVVLLAGYFCEQCRLRLGLSRVVLSPGARRHLLNYGWPGNVRELEHAIHRAVVLARATRAGDEVVLEEQHFALSEDVLPAPSAESFLALPACRNLRESTENFQREMIRQALAQNNHNWAASARALETDVANLHRLAKRLGLKD</sequence>
<reference key="1">
    <citation type="journal article" date="2005" name="Nucleic Acids Res.">
        <title>The genome sequence of Salmonella enterica serovar Choleraesuis, a highly invasive and resistant zoonotic pathogen.</title>
        <authorList>
            <person name="Chiu C.-H."/>
            <person name="Tang P."/>
            <person name="Chu C."/>
            <person name="Hu S."/>
            <person name="Bao Q."/>
            <person name="Yu J."/>
            <person name="Chou Y.-Y."/>
            <person name="Wang H.-S."/>
            <person name="Lee Y.-S."/>
        </authorList>
    </citation>
    <scope>NUCLEOTIDE SEQUENCE [LARGE SCALE GENOMIC DNA]</scope>
    <source>
        <strain>SC-B67</strain>
    </source>
</reference>
<dbReference type="EMBL" id="AE017220">
    <property type="protein sequence ID" value="AAX66678.1"/>
    <property type="status" value="ALT_FRAME"/>
    <property type="molecule type" value="Genomic_DNA"/>
</dbReference>
<dbReference type="SMR" id="Q57KT4"/>
<dbReference type="KEGG" id="sec:SCH_2772"/>
<dbReference type="HOGENOM" id="CLU_000445_125_2_6"/>
<dbReference type="UniPathway" id="UPA00638"/>
<dbReference type="Proteomes" id="UP000000538">
    <property type="component" value="Chromosome"/>
</dbReference>
<dbReference type="GO" id="GO:0005524">
    <property type="term" value="F:ATP binding"/>
    <property type="evidence" value="ECO:0007669"/>
    <property type="project" value="UniProtKB-UniRule"/>
</dbReference>
<dbReference type="GO" id="GO:0016887">
    <property type="term" value="F:ATP hydrolysis activity"/>
    <property type="evidence" value="ECO:0007669"/>
    <property type="project" value="InterPro"/>
</dbReference>
<dbReference type="GO" id="GO:0003677">
    <property type="term" value="F:DNA binding"/>
    <property type="evidence" value="ECO:0007669"/>
    <property type="project" value="UniProtKB-KW"/>
</dbReference>
<dbReference type="GO" id="GO:0003700">
    <property type="term" value="F:DNA-binding transcription factor activity"/>
    <property type="evidence" value="ECO:0007669"/>
    <property type="project" value="UniProtKB-UniRule"/>
</dbReference>
<dbReference type="GO" id="GO:0000160">
    <property type="term" value="P:phosphorelay signal transduction system"/>
    <property type="evidence" value="ECO:0007669"/>
    <property type="project" value="UniProtKB-UniRule"/>
</dbReference>
<dbReference type="CDD" id="cd00009">
    <property type="entry name" value="AAA"/>
    <property type="match status" value="1"/>
</dbReference>
<dbReference type="FunFam" id="1.10.8.60:FF:000045">
    <property type="entry name" value="Anaerobic nitric oxide reductase transcription regulator NorR"/>
    <property type="match status" value="1"/>
</dbReference>
<dbReference type="FunFam" id="3.30.450.40:FF:000021">
    <property type="entry name" value="Anaerobic nitric oxide reductase transcription regulator NorR"/>
    <property type="match status" value="1"/>
</dbReference>
<dbReference type="FunFam" id="3.40.50.300:FF:000006">
    <property type="entry name" value="DNA-binding transcriptional regulator NtrC"/>
    <property type="match status" value="1"/>
</dbReference>
<dbReference type="Gene3D" id="1.10.8.60">
    <property type="match status" value="1"/>
</dbReference>
<dbReference type="Gene3D" id="3.30.450.40">
    <property type="match status" value="1"/>
</dbReference>
<dbReference type="Gene3D" id="1.10.10.60">
    <property type="entry name" value="Homeodomain-like"/>
    <property type="match status" value="1"/>
</dbReference>
<dbReference type="Gene3D" id="3.40.50.300">
    <property type="entry name" value="P-loop containing nucleotide triphosphate hydrolases"/>
    <property type="match status" value="1"/>
</dbReference>
<dbReference type="HAMAP" id="MF_01314">
    <property type="entry name" value="NorR"/>
    <property type="match status" value="1"/>
</dbReference>
<dbReference type="InterPro" id="IPR003593">
    <property type="entry name" value="AAA+_ATPase"/>
</dbReference>
<dbReference type="InterPro" id="IPR003018">
    <property type="entry name" value="GAF"/>
</dbReference>
<dbReference type="InterPro" id="IPR029016">
    <property type="entry name" value="GAF-like_dom_sf"/>
</dbReference>
<dbReference type="InterPro" id="IPR009057">
    <property type="entry name" value="Homeodomain-like_sf"/>
</dbReference>
<dbReference type="InterPro" id="IPR023944">
    <property type="entry name" value="NorR"/>
</dbReference>
<dbReference type="InterPro" id="IPR027417">
    <property type="entry name" value="P-loop_NTPase"/>
</dbReference>
<dbReference type="InterPro" id="IPR002078">
    <property type="entry name" value="Sigma_54_int"/>
</dbReference>
<dbReference type="InterPro" id="IPR025662">
    <property type="entry name" value="Sigma_54_int_dom_ATP-bd_1"/>
</dbReference>
<dbReference type="InterPro" id="IPR025943">
    <property type="entry name" value="Sigma_54_int_dom_ATP-bd_2"/>
</dbReference>
<dbReference type="InterPro" id="IPR025944">
    <property type="entry name" value="Sigma_54_int_dom_CS"/>
</dbReference>
<dbReference type="NCBIfam" id="NF003451">
    <property type="entry name" value="PRK05022.1"/>
    <property type="match status" value="1"/>
</dbReference>
<dbReference type="PANTHER" id="PTHR32071:SF35">
    <property type="entry name" value="ANAEROBIC NITRIC OXIDE REDUCTASE TRANSCRIPTION REGULATOR NORR"/>
    <property type="match status" value="1"/>
</dbReference>
<dbReference type="PANTHER" id="PTHR32071">
    <property type="entry name" value="TRANSCRIPTIONAL REGULATORY PROTEIN"/>
    <property type="match status" value="1"/>
</dbReference>
<dbReference type="Pfam" id="PF01590">
    <property type="entry name" value="GAF"/>
    <property type="match status" value="1"/>
</dbReference>
<dbReference type="Pfam" id="PF00158">
    <property type="entry name" value="Sigma54_activat"/>
    <property type="match status" value="1"/>
</dbReference>
<dbReference type="SMART" id="SM00382">
    <property type="entry name" value="AAA"/>
    <property type="match status" value="1"/>
</dbReference>
<dbReference type="SMART" id="SM00065">
    <property type="entry name" value="GAF"/>
    <property type="match status" value="1"/>
</dbReference>
<dbReference type="SUPFAM" id="SSF55781">
    <property type="entry name" value="GAF domain-like"/>
    <property type="match status" value="1"/>
</dbReference>
<dbReference type="SUPFAM" id="SSF46689">
    <property type="entry name" value="Homeodomain-like"/>
    <property type="match status" value="1"/>
</dbReference>
<dbReference type="SUPFAM" id="SSF52540">
    <property type="entry name" value="P-loop containing nucleoside triphosphate hydrolases"/>
    <property type="match status" value="1"/>
</dbReference>
<dbReference type="PROSITE" id="PS00675">
    <property type="entry name" value="SIGMA54_INTERACT_1"/>
    <property type="match status" value="1"/>
</dbReference>
<dbReference type="PROSITE" id="PS00676">
    <property type="entry name" value="SIGMA54_INTERACT_2"/>
    <property type="match status" value="1"/>
</dbReference>
<dbReference type="PROSITE" id="PS00688">
    <property type="entry name" value="SIGMA54_INTERACT_3"/>
    <property type="match status" value="1"/>
</dbReference>
<dbReference type="PROSITE" id="PS50045">
    <property type="entry name" value="SIGMA54_INTERACT_4"/>
    <property type="match status" value="1"/>
</dbReference>
<proteinExistence type="inferred from homology"/>
<protein>
    <recommendedName>
        <fullName evidence="1">Anaerobic nitric oxide reductase transcription regulator NorR</fullName>
    </recommendedName>
</protein>
<feature type="chain" id="PRO_0000305622" description="Anaerobic nitric oxide reductase transcription regulator NorR">
    <location>
        <begin position="1"/>
        <end position="506"/>
    </location>
</feature>
<feature type="domain" description="Sigma-54 factor interaction" evidence="1">
    <location>
        <begin position="187"/>
        <end position="416"/>
    </location>
</feature>
<feature type="DNA-binding region" description="H-T-H motif" evidence="1">
    <location>
        <begin position="481"/>
        <end position="500"/>
    </location>
</feature>
<feature type="binding site" evidence="1">
    <location>
        <begin position="215"/>
        <end position="222"/>
    </location>
    <ligand>
        <name>ATP</name>
        <dbReference type="ChEBI" id="CHEBI:30616"/>
    </ligand>
</feature>
<feature type="binding site" evidence="1">
    <location>
        <begin position="278"/>
        <end position="287"/>
    </location>
    <ligand>
        <name>ATP</name>
        <dbReference type="ChEBI" id="CHEBI:30616"/>
    </ligand>
</feature>
<feature type="modified residue" description="4-aspartylphosphate" evidence="1">
    <location>
        <position position="57"/>
    </location>
</feature>
<organism>
    <name type="scientific">Salmonella choleraesuis (strain SC-B67)</name>
    <dbReference type="NCBI Taxonomy" id="321314"/>
    <lineage>
        <taxon>Bacteria</taxon>
        <taxon>Pseudomonadati</taxon>
        <taxon>Pseudomonadota</taxon>
        <taxon>Gammaproteobacteria</taxon>
        <taxon>Enterobacterales</taxon>
        <taxon>Enterobacteriaceae</taxon>
        <taxon>Salmonella</taxon>
    </lineage>
</organism>
<name>NORR_SALCH</name>
<gene>
    <name evidence="1" type="primary">norR</name>
    <name type="ordered locus">SCH_2772</name>
</gene>
<evidence type="ECO:0000255" key="1">
    <source>
        <dbReference type="HAMAP-Rule" id="MF_01314"/>
    </source>
</evidence>
<evidence type="ECO:0000305" key="2"/>
<accession>Q57KT4</accession>
<comment type="function">
    <text evidence="1">Required for the expression of anaerobic nitric oxide (NO) reductase, acts as a transcriptional activator for at least the norVW operon. Activation also requires sigma-54.</text>
</comment>
<comment type="pathway">
    <text evidence="1">Nitrogen metabolism; nitric oxide reduction.</text>
</comment>
<comment type="sequence caution" evidence="2">
    <conflict type="frameshift">
        <sequence resource="EMBL-CDS" id="AAX66678"/>
    </conflict>
</comment>
<keyword id="KW-0067">ATP-binding</keyword>
<keyword id="KW-0238">DNA-binding</keyword>
<keyword id="KW-0547">Nucleotide-binding</keyword>
<keyword id="KW-0597">Phosphoprotein</keyword>
<keyword id="KW-0804">Transcription</keyword>
<keyword id="KW-0805">Transcription regulation</keyword>